<gene>
    <name type="primary">VMA3</name>
</gene>
<accession>Q24808</accession>
<comment type="function">
    <text>Proton-conducting pore forming subunit of the membrane integral V0 complex of vacuolar ATPase. V-ATPase is responsible for acidifying a variety of intracellular compartments in eukaryotic cells.</text>
</comment>
<comment type="subunit">
    <text>V-ATPase is a heteromultimeric enzyme composed of a peripheral catalytic V1 complex (main components: subunits A, B, C, D, E, and F) attached to an integral membrane V0 proton pore complex (main component: the proteolipid protein; which is present as a hexamer that forms the proton-conducting pore).</text>
</comment>
<comment type="subcellular location">
    <subcellularLocation>
        <location>Vacuole membrane</location>
        <topology>Multi-pass membrane protein</topology>
    </subcellularLocation>
</comment>
<comment type="similarity">
    <text evidence="3">Belongs to the V-ATPase proteolipid subunit family.</text>
</comment>
<organism>
    <name type="scientific">Entamoeba dispar</name>
    <dbReference type="NCBI Taxonomy" id="46681"/>
    <lineage>
        <taxon>Eukaryota</taxon>
        <taxon>Amoebozoa</taxon>
        <taxon>Evosea</taxon>
        <taxon>Archamoebae</taxon>
        <taxon>Mastigamoebida</taxon>
        <taxon>Entamoebidae</taxon>
        <taxon>Entamoeba</taxon>
    </lineage>
</organism>
<reference key="1">
    <citation type="journal article" date="1994" name="Infect. Immun.">
        <title>Cloning of Entamoeba genes encoding proteolipids of putative vacuolar proton-translocating ATPases.</title>
        <authorList>
            <person name="Descoteaux S."/>
            <person name="Yu Y."/>
            <person name="Samuelson J."/>
        </authorList>
    </citation>
    <scope>NUCLEOTIDE SEQUENCE [MRNA]</scope>
    <source>
        <strain>Non-pathogenic</strain>
    </source>
</reference>
<name>VATL_ENTDI</name>
<dbReference type="EMBL" id="U01055">
    <property type="protein sequence ID" value="AAA21448.1"/>
    <property type="molecule type" value="mRNA"/>
</dbReference>
<dbReference type="SMR" id="Q24808"/>
<dbReference type="VEuPathDB" id="AmoebaDB:EDI_187830"/>
<dbReference type="GO" id="GO:0033179">
    <property type="term" value="C:proton-transporting V-type ATPase, V0 domain"/>
    <property type="evidence" value="ECO:0007669"/>
    <property type="project" value="InterPro"/>
</dbReference>
<dbReference type="GO" id="GO:0005774">
    <property type="term" value="C:vacuolar membrane"/>
    <property type="evidence" value="ECO:0007669"/>
    <property type="project" value="UniProtKB-SubCell"/>
</dbReference>
<dbReference type="GO" id="GO:0046961">
    <property type="term" value="F:proton-transporting ATPase activity, rotational mechanism"/>
    <property type="evidence" value="ECO:0007669"/>
    <property type="project" value="InterPro"/>
</dbReference>
<dbReference type="CDD" id="cd18175">
    <property type="entry name" value="ATP-synt_Vo_c_ATP6C_rpt1"/>
    <property type="match status" value="1"/>
</dbReference>
<dbReference type="CDD" id="cd18176">
    <property type="entry name" value="ATP-synt_Vo_c_ATP6C_rpt2"/>
    <property type="match status" value="1"/>
</dbReference>
<dbReference type="FunFam" id="1.20.120.610:FF:000001">
    <property type="entry name" value="V-type proton ATPase proteolipid subunit"/>
    <property type="match status" value="1"/>
</dbReference>
<dbReference type="Gene3D" id="1.20.120.610">
    <property type="entry name" value="lithium bound rotor ring of v- atpase"/>
    <property type="match status" value="1"/>
</dbReference>
<dbReference type="InterPro" id="IPR002379">
    <property type="entry name" value="ATPase_proteolipid_c-like_dom"/>
</dbReference>
<dbReference type="InterPro" id="IPR000245">
    <property type="entry name" value="ATPase_proteolipid_csu"/>
</dbReference>
<dbReference type="InterPro" id="IPR011555">
    <property type="entry name" value="ATPase_proteolipid_su_C_euk"/>
</dbReference>
<dbReference type="InterPro" id="IPR035921">
    <property type="entry name" value="F/V-ATP_Csub_sf"/>
</dbReference>
<dbReference type="NCBIfam" id="TIGR01100">
    <property type="entry name" value="V_ATP_synt_C"/>
    <property type="match status" value="1"/>
</dbReference>
<dbReference type="PANTHER" id="PTHR10263">
    <property type="entry name" value="V-TYPE PROTON ATPASE PROTEOLIPID SUBUNIT"/>
    <property type="match status" value="1"/>
</dbReference>
<dbReference type="Pfam" id="PF00137">
    <property type="entry name" value="ATP-synt_C"/>
    <property type="match status" value="2"/>
</dbReference>
<dbReference type="PRINTS" id="PR00122">
    <property type="entry name" value="VACATPASE"/>
</dbReference>
<dbReference type="SUPFAM" id="SSF81333">
    <property type="entry name" value="F1F0 ATP synthase subunit C"/>
    <property type="match status" value="1"/>
</dbReference>
<feature type="chain" id="PRO_0000071754" description="V-type proton ATPase 16 kDa proteolipid subunit">
    <location>
        <begin position="1"/>
        <end position="176"/>
    </location>
</feature>
<feature type="topological domain" description="Lumenal" evidence="2">
    <location>
        <begin position="1"/>
        <end position="17"/>
    </location>
</feature>
<feature type="transmembrane region" description="Helical" evidence="2">
    <location>
        <begin position="18"/>
        <end position="38"/>
    </location>
</feature>
<feature type="topological domain" description="Cytoplasmic" evidence="2">
    <location>
        <begin position="39"/>
        <end position="62"/>
    </location>
</feature>
<feature type="transmembrane region" description="Helical" evidence="2">
    <location>
        <begin position="63"/>
        <end position="83"/>
    </location>
</feature>
<feature type="topological domain" description="Lumenal" evidence="2">
    <location>
        <begin position="84"/>
        <end position="98"/>
    </location>
</feature>
<feature type="transmembrane region" description="Helical" evidence="2">
    <location>
        <begin position="99"/>
        <end position="119"/>
    </location>
</feature>
<feature type="topological domain" description="Cytoplasmic" evidence="2">
    <location>
        <begin position="120"/>
        <end position="136"/>
    </location>
</feature>
<feature type="transmembrane region" description="Helical" evidence="2">
    <location>
        <begin position="137"/>
        <end position="157"/>
    </location>
</feature>
<feature type="topological domain" description="Lumenal" evidence="2">
    <location>
        <begin position="158"/>
        <end position="176"/>
    </location>
</feature>
<feature type="site" description="Essential for proton translocation" evidence="1">
    <location>
        <position position="145"/>
    </location>
</feature>
<keyword id="KW-0375">Hydrogen ion transport</keyword>
<keyword id="KW-0406">Ion transport</keyword>
<keyword id="KW-0472">Membrane</keyword>
<keyword id="KW-0812">Transmembrane</keyword>
<keyword id="KW-1133">Transmembrane helix</keyword>
<keyword id="KW-0813">Transport</keyword>
<keyword id="KW-0926">Vacuole</keyword>
<evidence type="ECO:0000250" key="1"/>
<evidence type="ECO:0000255" key="2"/>
<evidence type="ECO:0000305" key="3"/>
<protein>
    <recommendedName>
        <fullName>V-type proton ATPase 16 kDa proteolipid subunit</fullName>
        <shortName>V-ATPase 16 kDa proteolipid subunit</shortName>
    </recommendedName>
    <alternativeName>
        <fullName>Vacuolar proton pump 16 kDa proteolipid subunit</fullName>
    </alternativeName>
</protein>
<sequence>MSVLLRSVTELCPVYSPFFGSMGITASIVFTVFGGAYGTAKSSVGISSVGVMKPEFIMRSLFPVVFAGVIGLYGLIVCIVLFINVNKSEYSLNRAFLDLGAGLTCGLCGLASGMSIGISGDCGVRGAAQQPKLFVSMLICLIFSEALALYGFIVALIMAATGDNSCVATASTSSSS</sequence>
<proteinExistence type="evidence at transcript level"/>